<organism>
    <name type="scientific">Arabidopsis thaliana</name>
    <name type="common">Mouse-ear cress</name>
    <dbReference type="NCBI Taxonomy" id="3702"/>
    <lineage>
        <taxon>Eukaryota</taxon>
        <taxon>Viridiplantae</taxon>
        <taxon>Streptophyta</taxon>
        <taxon>Embryophyta</taxon>
        <taxon>Tracheophyta</taxon>
        <taxon>Spermatophyta</taxon>
        <taxon>Magnoliopsida</taxon>
        <taxon>eudicotyledons</taxon>
        <taxon>Gunneridae</taxon>
        <taxon>Pentapetalae</taxon>
        <taxon>rosids</taxon>
        <taxon>malvids</taxon>
        <taxon>Brassicales</taxon>
        <taxon>Brassicaceae</taxon>
        <taxon>Camelineae</taxon>
        <taxon>Arabidopsis</taxon>
    </lineage>
</organism>
<name>APRR1_ARATH</name>
<accession>Q9LKL2</accession>
<accession>Q9M4B7</accession>
<sequence>MDLNGECKGGDGFIDRSRVRILLCDNDSTSLGEVFTLLSECSYQVTAVKSARQVIDALNAEGPDIDIILAEIDLPMAKGMKMLRYITRDKDLRRIPVIMMSRQDEVPVVVKCLKLGAADYLVKPLRTNELLNLWTHMWRRRRMLGLAEKNMLSYDFDLVGSDQSDPNTNSTNLFSDDTDDRSLRSTNPQRGNLSHQENEWSVATAPVHARDGGLGADGTATSSLAVTAIEPPLDHLAGSHHEPMKRNSNPAQFSSAPKKSRLKIGESSAFFTYVKSTVLRTNGQDPPLVDGNGSLHLHRGLAEKFQVVASEGINNTKQARRATPKSTVLRTNGQDPPLVNGNGSHHLHRGAAEKFQVVASEGINNTKQAHRSRGTEQYHSQGETLQNGASYPHSLERSRTLPTSMESHGRNYQEGNMNIPQVAMNRSKDSSQVDGSGFSAPNAYPYYMHGVMNQVMMQSAAMMPQYGHQIPHCQPNHPNGMTGYPYYHHPMNTSLQHSQMSLQNGQMSMVHHSWSPAGNPPSNEVRVNKLDRREEALLKFRRKRNQRCFDKKIRYVNRKRLAERRPRVKGQFVRKMNGVNVDLNGQPDSADYDDEEEEEEEEEEENRDSSPQDDALGT</sequence>
<evidence type="ECO:0000255" key="1"/>
<evidence type="ECO:0000255" key="2">
    <source>
        <dbReference type="PROSITE-ProRule" id="PRU00169"/>
    </source>
</evidence>
<evidence type="ECO:0000255" key="3">
    <source>
        <dbReference type="PROSITE-ProRule" id="PRU00357"/>
    </source>
</evidence>
<evidence type="ECO:0000256" key="4">
    <source>
        <dbReference type="SAM" id="MobiDB-lite"/>
    </source>
</evidence>
<evidence type="ECO:0000269" key="5">
    <source>
    </source>
</evidence>
<evidence type="ECO:0000269" key="6">
    <source>
    </source>
</evidence>
<evidence type="ECO:0000269" key="7">
    <source>
    </source>
</evidence>
<evidence type="ECO:0000269" key="8">
    <source>
    </source>
</evidence>
<evidence type="ECO:0000269" key="9">
    <source>
    </source>
</evidence>
<evidence type="ECO:0000269" key="10">
    <source>
    </source>
</evidence>
<evidence type="ECO:0000269" key="11">
    <source>
    </source>
</evidence>
<evidence type="ECO:0000269" key="12">
    <source>
    </source>
</evidence>
<evidence type="ECO:0000269" key="13">
    <source>
    </source>
</evidence>
<evidence type="ECO:0000269" key="14">
    <source>
    </source>
</evidence>
<evidence type="ECO:0000269" key="15">
    <source>
    </source>
</evidence>
<evidence type="ECO:0000305" key="16"/>
<gene>
    <name type="primary">APRR1</name>
    <name type="synonym">AIP1</name>
    <name type="synonym">TOC1</name>
    <name type="ordered locus">At5g61380</name>
    <name type="ORF">MFB13.16</name>
</gene>
<dbReference type="EMBL" id="AB041530">
    <property type="protein sequence ID" value="BAA94547.1"/>
    <property type="molecule type" value="mRNA"/>
</dbReference>
<dbReference type="EMBL" id="AF272039">
    <property type="protein sequence ID" value="AAF86252.1"/>
    <property type="molecule type" value="mRNA"/>
</dbReference>
<dbReference type="EMBL" id="AJ251086">
    <property type="protein sequence ID" value="CAB75508.1"/>
    <property type="molecule type" value="mRNA"/>
</dbReference>
<dbReference type="EMBL" id="AB010073">
    <property type="protein sequence ID" value="BAB08493.1"/>
    <property type="molecule type" value="Genomic_DNA"/>
</dbReference>
<dbReference type="EMBL" id="CP002688">
    <property type="protein sequence ID" value="AED97460.1"/>
    <property type="molecule type" value="Genomic_DNA"/>
</dbReference>
<dbReference type="EMBL" id="AY094393">
    <property type="protein sequence ID" value="AAM19772.1"/>
    <property type="molecule type" value="mRNA"/>
</dbReference>
<dbReference type="EMBL" id="BT005816">
    <property type="protein sequence ID" value="AAO64751.1"/>
    <property type="molecule type" value="mRNA"/>
</dbReference>
<dbReference type="PIR" id="T52075">
    <property type="entry name" value="T52075"/>
</dbReference>
<dbReference type="PIR" id="T52076">
    <property type="entry name" value="T52076"/>
</dbReference>
<dbReference type="RefSeq" id="NP_200946.1">
    <property type="nucleotide sequence ID" value="NM_125531.4"/>
</dbReference>
<dbReference type="SMR" id="Q9LKL2"/>
<dbReference type="BioGRID" id="21503">
    <property type="interactions" value="50"/>
</dbReference>
<dbReference type="DIP" id="DIP-33896N"/>
<dbReference type="FunCoup" id="Q9LKL2">
    <property type="interactions" value="114"/>
</dbReference>
<dbReference type="IntAct" id="Q9LKL2">
    <property type="interactions" value="44"/>
</dbReference>
<dbReference type="MINT" id="Q9LKL2"/>
<dbReference type="STRING" id="3702.Q9LKL2"/>
<dbReference type="iPTMnet" id="Q9LKL2"/>
<dbReference type="PaxDb" id="3702-AT5G61380.1"/>
<dbReference type="ProteomicsDB" id="244410"/>
<dbReference type="EnsemblPlants" id="AT5G61380.1">
    <property type="protein sequence ID" value="AT5G61380.1"/>
    <property type="gene ID" value="AT5G61380"/>
</dbReference>
<dbReference type="GeneID" id="836259"/>
<dbReference type="Gramene" id="AT5G61380.1">
    <property type="protein sequence ID" value="AT5G61380.1"/>
    <property type="gene ID" value="AT5G61380"/>
</dbReference>
<dbReference type="KEGG" id="ath:AT5G61380"/>
<dbReference type="Araport" id="AT5G61380"/>
<dbReference type="TAIR" id="AT5G61380">
    <property type="gene designation" value="TOC1"/>
</dbReference>
<dbReference type="eggNOG" id="KOG1601">
    <property type="taxonomic scope" value="Eukaryota"/>
</dbReference>
<dbReference type="HOGENOM" id="CLU_041215_0_0_1"/>
<dbReference type="InParanoid" id="Q9LKL2"/>
<dbReference type="OMA" id="AHASECR"/>
<dbReference type="OrthoDB" id="60033at2759"/>
<dbReference type="PhylomeDB" id="Q9LKL2"/>
<dbReference type="PRO" id="PR:Q9LKL2"/>
<dbReference type="Proteomes" id="UP000006548">
    <property type="component" value="Chromosome 5"/>
</dbReference>
<dbReference type="ExpressionAtlas" id="Q9LKL2">
    <property type="expression patterns" value="baseline and differential"/>
</dbReference>
<dbReference type="GO" id="GO:0005634">
    <property type="term" value="C:nucleus"/>
    <property type="evidence" value="ECO:0000314"/>
    <property type="project" value="TAIR"/>
</dbReference>
<dbReference type="GO" id="GO:0003677">
    <property type="term" value="F:DNA binding"/>
    <property type="evidence" value="ECO:0000314"/>
    <property type="project" value="TAIR"/>
</dbReference>
<dbReference type="GO" id="GO:0003700">
    <property type="term" value="F:DNA-binding transcription factor activity"/>
    <property type="evidence" value="ECO:0000314"/>
    <property type="project" value="TAIR"/>
</dbReference>
<dbReference type="GO" id="GO:0007623">
    <property type="term" value="P:circadian rhythm"/>
    <property type="evidence" value="ECO:0000270"/>
    <property type="project" value="TAIR"/>
</dbReference>
<dbReference type="GO" id="GO:0010031">
    <property type="term" value="P:circumnutation"/>
    <property type="evidence" value="ECO:0000315"/>
    <property type="project" value="TAIR"/>
</dbReference>
<dbReference type="GO" id="GO:0009736">
    <property type="term" value="P:cytokinin-activated signaling pathway"/>
    <property type="evidence" value="ECO:0007669"/>
    <property type="project" value="InterPro"/>
</dbReference>
<dbReference type="GO" id="GO:0006351">
    <property type="term" value="P:DNA-templated transcription"/>
    <property type="evidence" value="ECO:0000304"/>
    <property type="project" value="UniProtKB"/>
</dbReference>
<dbReference type="GO" id="GO:0009908">
    <property type="term" value="P:flower development"/>
    <property type="evidence" value="ECO:0007669"/>
    <property type="project" value="UniProtKB-KW"/>
</dbReference>
<dbReference type="GO" id="GO:0010629">
    <property type="term" value="P:negative regulation of gene expression"/>
    <property type="evidence" value="ECO:0000314"/>
    <property type="project" value="TAIR"/>
</dbReference>
<dbReference type="GO" id="GO:0000160">
    <property type="term" value="P:phosphorelay signal transduction system"/>
    <property type="evidence" value="ECO:0007669"/>
    <property type="project" value="UniProtKB-KW"/>
</dbReference>
<dbReference type="GO" id="GO:0006355">
    <property type="term" value="P:regulation of DNA-templated transcription"/>
    <property type="evidence" value="ECO:0000250"/>
    <property type="project" value="TAIR"/>
</dbReference>
<dbReference type="GO" id="GO:0010468">
    <property type="term" value="P:regulation of gene expression"/>
    <property type="evidence" value="ECO:0000315"/>
    <property type="project" value="TAIR"/>
</dbReference>
<dbReference type="CDD" id="cd17582">
    <property type="entry name" value="psREC_PRR"/>
    <property type="match status" value="1"/>
</dbReference>
<dbReference type="FunFam" id="3.40.50.2300:FF:000316">
    <property type="entry name" value="Two-component response regulator-like APRR1"/>
    <property type="match status" value="1"/>
</dbReference>
<dbReference type="Gene3D" id="3.40.50.2300">
    <property type="match status" value="1"/>
</dbReference>
<dbReference type="InterPro" id="IPR045279">
    <property type="entry name" value="ARR-like"/>
</dbReference>
<dbReference type="InterPro" id="IPR010402">
    <property type="entry name" value="CCT_domain"/>
</dbReference>
<dbReference type="InterPro" id="IPR011006">
    <property type="entry name" value="CheY-like_superfamily"/>
</dbReference>
<dbReference type="InterPro" id="IPR001789">
    <property type="entry name" value="Sig_transdc_resp-reg_receiver"/>
</dbReference>
<dbReference type="PANTHER" id="PTHR43874">
    <property type="entry name" value="TWO-COMPONENT RESPONSE REGULATOR"/>
    <property type="match status" value="1"/>
</dbReference>
<dbReference type="PANTHER" id="PTHR43874:SF1">
    <property type="entry name" value="TWO-COMPONENT RESPONSE REGULATOR-LIKE APRR1"/>
    <property type="match status" value="1"/>
</dbReference>
<dbReference type="Pfam" id="PF06203">
    <property type="entry name" value="CCT"/>
    <property type="match status" value="1"/>
</dbReference>
<dbReference type="Pfam" id="PF00072">
    <property type="entry name" value="Response_reg"/>
    <property type="match status" value="1"/>
</dbReference>
<dbReference type="SMART" id="SM00448">
    <property type="entry name" value="REC"/>
    <property type="match status" value="1"/>
</dbReference>
<dbReference type="SUPFAM" id="SSF52172">
    <property type="entry name" value="CheY-like"/>
    <property type="match status" value="1"/>
</dbReference>
<dbReference type="PROSITE" id="PS51017">
    <property type="entry name" value="CCT"/>
    <property type="match status" value="1"/>
</dbReference>
<dbReference type="PROSITE" id="PS50110">
    <property type="entry name" value="RESPONSE_REGULATORY"/>
    <property type="match status" value="1"/>
</dbReference>
<protein>
    <recommendedName>
        <fullName>Two-component response regulator-like APRR1</fullName>
    </recommendedName>
    <alternativeName>
        <fullName>ABI3-interacting protein 1</fullName>
    </alternativeName>
    <alternativeName>
        <fullName>Pseudo-response regulator 1</fullName>
    </alternativeName>
    <alternativeName>
        <fullName>Timing of CAB expression 1</fullName>
    </alternativeName>
</protein>
<comment type="function">
    <text evidence="7 15">Controls photoperiodic flowering response. Component of the circadian clock. Expression of several members of the ARR-like family is controlled by circadian rhythm. The particular coordinated sequential expression of APRR9, APRR7, APRR5, APRR3 and APPR1 result to circadian waves that may be at the basis of the endogenous circadian clock. Positive regulator of CCA1 and LHY expression.</text>
</comment>
<comment type="subunit">
    <text evidence="5 9 10 11 12 13 14 15">Interacts with PIF1, PIL2, PIF3, PIF4, PIL5, PIL6, ABI3 (via C-terminus), ADO1/ZTL, ADO2, APRR3 and TCP21/CHE. Both the phosphorylated and the dephosphorylated forms interact with ADO1/ZLT.</text>
</comment>
<comment type="interaction">
    <interactant intactId="EBI-618423">
        <id>Q9LKL2</id>
    </interactant>
    <interactant intactId="EBI-300691">
        <id>Q94BT6</id>
        <label>ADO1</label>
    </interactant>
    <organismsDiffer>false</organismsDiffer>
    <experiments>7</experiments>
</comment>
<comment type="interaction">
    <interactant intactId="EBI-618423">
        <id>Q9LKL2</id>
    </interactant>
    <interactant intactId="EBI-1606968">
        <id>Q9LVG4</id>
        <label>APRR3</label>
    </interactant>
    <organismsDiffer>false</organismsDiffer>
    <experiments>3</experiments>
</comment>
<comment type="interaction">
    <interactant intactId="EBI-618423">
        <id>Q9LKL2</id>
    </interactant>
    <interactant intactId="EBI-1536669">
        <id>Q6LA42</id>
        <label>APRR5</label>
    </interactant>
    <organismsDiffer>false</organismsDiffer>
    <experiments>5</experiments>
</comment>
<comment type="interaction">
    <interactant intactId="EBI-618423">
        <id>Q9LKL2</id>
    </interactant>
    <interactant intactId="EBI-4426649">
        <id>Q17TI5</id>
        <label>BRX</label>
    </interactant>
    <organismsDiffer>false</organismsDiffer>
    <experiments>3</experiments>
</comment>
<comment type="interaction">
    <interactant intactId="EBI-618423">
        <id>Q9LKL2</id>
    </interactant>
    <interactant intactId="EBI-3946710">
        <id>Q9M1R4</id>
        <label>IAA30</label>
    </interactant>
    <organismsDiffer>false</organismsDiffer>
    <experiments>3</experiments>
</comment>
<comment type="interaction">
    <interactant intactId="EBI-618423">
        <id>Q9LKL2</id>
    </interactant>
    <interactant intactId="EBI-2466050">
        <id>Q8L4B2</id>
        <label>NFYC9</label>
    </interactant>
    <organismsDiffer>false</organismsDiffer>
    <experiments>3</experiments>
</comment>
<comment type="interaction">
    <interactant intactId="EBI-618423">
        <id>Q9LKL2</id>
    </interactant>
    <interactant intactId="EBI-630752">
        <id>Q8L5W8</id>
        <label>PIL1</label>
    </interactant>
    <organismsDiffer>false</organismsDiffer>
    <experiments>3</experiments>
</comment>
<comment type="interaction">
    <interactant intactId="EBI-618423">
        <id>Q9LKL2</id>
    </interactant>
    <interactant intactId="EBI-395803">
        <id>Q9XGN1</id>
        <label>TTG1</label>
    </interactant>
    <organismsDiffer>false</organismsDiffer>
    <experiments>4</experiments>
</comment>
<comment type="subcellular location">
    <subcellularLocation>
        <location evidence="3 14">Nucleus</location>
    </subcellularLocation>
</comment>
<comment type="tissue specificity">
    <text evidence="5 13">Expressed in leaves, flowers and siliques. Restricted to the vasculature.</text>
</comment>
<comment type="induction">
    <text evidence="8 14">Expressed with a circadian rhythm showing a broad peak in the late day and early night. Negatively regulated by LHY and CCA1.</text>
</comment>
<comment type="domain">
    <text>The N-terminus (1-243) is required for interactions with ADO1/ZTL and APRR3.</text>
</comment>
<comment type="PTM">
    <text evidence="14">Phosphorylated; during the day. Phosphorylation is required for optimal interaction with APRR3.</text>
</comment>
<comment type="miscellaneous">
    <text>Subject of targeted degradation by the 26S proteasome. ZEITLUPE (ADO1/ZTL) is the F-box protein that associates with the SCF (for Skp/Cullin/F-box) E3 ubiquitin ligase that is responsible for marking APRR1/TOC1 for turnover. CUL1 is the functional cullin for the SCF(ZTL) complex. APRR3 binding competitively inhibits the ADO1/ZTL interaction.</text>
</comment>
<comment type="similarity">
    <text evidence="16">Belongs to the ARR-like family.</text>
</comment>
<comment type="caution">
    <text evidence="16">Lacks the phospho-accepting Asp (here Glu-71), present in the receiver domain, which is one of the conserved features of the two-component response regulators (ARRs) family.</text>
</comment>
<feature type="chain" id="PRO_0000081435" description="Two-component response regulator-like APRR1">
    <location>
        <begin position="1"/>
        <end position="618"/>
    </location>
</feature>
<feature type="domain" description="Response regulatory" evidence="2">
    <location>
        <begin position="20"/>
        <end position="138"/>
    </location>
</feature>
<feature type="domain" description="CCT" evidence="3">
    <location>
        <begin position="533"/>
        <end position="575"/>
    </location>
</feature>
<feature type="region of interest" description="Disordered" evidence="4">
    <location>
        <begin position="161"/>
        <end position="200"/>
    </location>
</feature>
<feature type="region of interest" description="Disordered" evidence="4">
    <location>
        <begin position="239"/>
        <end position="260"/>
    </location>
</feature>
<feature type="region of interest" description="Disordered" evidence="4">
    <location>
        <begin position="316"/>
        <end position="338"/>
    </location>
</feature>
<feature type="region of interest" description="Disordered" evidence="4">
    <location>
        <begin position="368"/>
        <end position="395"/>
    </location>
</feature>
<feature type="region of interest" description="Disordered" evidence="4">
    <location>
        <begin position="573"/>
        <end position="618"/>
    </location>
</feature>
<feature type="coiled-coil region" evidence="1">
    <location>
        <begin position="588"/>
        <end position="610"/>
    </location>
</feature>
<feature type="compositionally biased region" description="Polar residues" evidence="4">
    <location>
        <begin position="161"/>
        <end position="174"/>
    </location>
</feature>
<feature type="compositionally biased region" description="Polar residues" evidence="4">
    <location>
        <begin position="187"/>
        <end position="200"/>
    </location>
</feature>
<feature type="compositionally biased region" description="Polar residues" evidence="4">
    <location>
        <begin position="246"/>
        <end position="257"/>
    </location>
</feature>
<feature type="compositionally biased region" description="Polar residues" evidence="4">
    <location>
        <begin position="324"/>
        <end position="334"/>
    </location>
</feature>
<feature type="compositionally biased region" description="Polar residues" evidence="4">
    <location>
        <begin position="375"/>
        <end position="389"/>
    </location>
</feature>
<feature type="compositionally biased region" description="Acidic residues" evidence="4">
    <location>
        <begin position="590"/>
        <end position="606"/>
    </location>
</feature>
<feature type="mutagenesis site" description="In toc1-1; causes shortened circadian rhythms in light-grown plants." evidence="6">
    <original>A</original>
    <variation>V</variation>
    <location>
        <position position="562"/>
    </location>
</feature>
<feature type="sequence conflict" description="In Ref. 2; CAB75508." evidence="16" ref="2">
    <original>R</original>
    <variation>L</variation>
    <location>
        <position position="126"/>
    </location>
</feature>
<reference key="1">
    <citation type="journal article" date="2000" name="Plant Cell Physiol.">
        <title>Genes encoding pseudo-response regulators: insight into His-to-Asp phosphorelay and circadian rhythm in Arabidopsis thaliana.</title>
        <authorList>
            <person name="Makino S."/>
            <person name="Kiba T."/>
            <person name="Imamura A."/>
            <person name="Hanaki N."/>
            <person name="Nakamura A."/>
            <person name="Suzuki T."/>
            <person name="Taniguchi M."/>
            <person name="Ueguchi C."/>
            <person name="Sugiyama T."/>
            <person name="Mizuno T."/>
        </authorList>
    </citation>
    <scope>NUCLEOTIDE SEQUENCE [MRNA]</scope>
    <scope>CHARACTERIZATION</scope>
    <scope>GENE FAMILY</scope>
    <source>
        <strain>cv. Columbia</strain>
    </source>
</reference>
<reference key="2">
    <citation type="journal article" date="2000" name="Science">
        <title>Cloning of the Arabidopsis clock gene TOC1, an autoregulatory response regulator homolog.</title>
        <authorList>
            <person name="Strayer C."/>
            <person name="Oyama T."/>
            <person name="Schultz T.F."/>
            <person name="Raman R."/>
            <person name="Somers D.E."/>
            <person name="Mas P."/>
            <person name="Panda S."/>
            <person name="Kreps J.A."/>
            <person name="Kay S.A."/>
        </authorList>
    </citation>
    <scope>NUCLEOTIDE SEQUENCE [MRNA]</scope>
    <scope>MUTAGENESIS OF ALA-562</scope>
    <source>
        <strain>cv. Columbia</strain>
    </source>
</reference>
<reference key="3">
    <citation type="journal article" date="2000" name="Plant J.">
        <title>Interactions of the developmental regulator ABI3 with proteins identified from developing Arabidopsis seeds.</title>
        <authorList>
            <person name="Kurup S."/>
            <person name="Jones H.D."/>
            <person name="Holdsworth M.J."/>
        </authorList>
    </citation>
    <scope>NUCLEOTIDE SEQUENCE [MRNA]</scope>
    <scope>TISSUE SPECIFICITY</scope>
    <scope>INTERACTION WITH ABI3</scope>
    <source>
        <strain>cv. Landsberg erecta</strain>
    </source>
</reference>
<reference key="4">
    <citation type="journal article" date="1998" name="DNA Res.">
        <title>Structural analysis of Arabidopsis thaliana chromosome 5. IV. Sequence features of the regions of 1,456,315 bp covered by nineteen physically assigned P1 and TAC clones.</title>
        <authorList>
            <person name="Sato S."/>
            <person name="Kaneko T."/>
            <person name="Kotani H."/>
            <person name="Nakamura Y."/>
            <person name="Asamizu E."/>
            <person name="Miyajima N."/>
            <person name="Tabata S."/>
        </authorList>
    </citation>
    <scope>NUCLEOTIDE SEQUENCE [LARGE SCALE GENOMIC DNA]</scope>
    <source>
        <strain>cv. Columbia</strain>
    </source>
</reference>
<reference key="5">
    <citation type="journal article" date="2017" name="Plant J.">
        <title>Araport11: a complete reannotation of the Arabidopsis thaliana reference genome.</title>
        <authorList>
            <person name="Cheng C.Y."/>
            <person name="Krishnakumar V."/>
            <person name="Chan A.P."/>
            <person name="Thibaud-Nissen F."/>
            <person name="Schobel S."/>
            <person name="Town C.D."/>
        </authorList>
    </citation>
    <scope>GENOME REANNOTATION</scope>
    <source>
        <strain>cv. Columbia</strain>
    </source>
</reference>
<reference key="6">
    <citation type="journal article" date="2003" name="Science">
        <title>Empirical analysis of transcriptional activity in the Arabidopsis genome.</title>
        <authorList>
            <person name="Yamada K."/>
            <person name="Lim J."/>
            <person name="Dale J.M."/>
            <person name="Chen H."/>
            <person name="Shinn P."/>
            <person name="Palm C.J."/>
            <person name="Southwick A.M."/>
            <person name="Wu H.C."/>
            <person name="Kim C.J."/>
            <person name="Nguyen M."/>
            <person name="Pham P.K."/>
            <person name="Cheuk R.F."/>
            <person name="Karlin-Newmann G."/>
            <person name="Liu S.X."/>
            <person name="Lam B."/>
            <person name="Sakano H."/>
            <person name="Wu T."/>
            <person name="Yu G."/>
            <person name="Miranda M."/>
            <person name="Quach H.L."/>
            <person name="Tripp M."/>
            <person name="Chang C.H."/>
            <person name="Lee J.M."/>
            <person name="Toriumi M.J."/>
            <person name="Chan M.M."/>
            <person name="Tang C.C."/>
            <person name="Onodera C.S."/>
            <person name="Deng J.M."/>
            <person name="Akiyama K."/>
            <person name="Ansari Y."/>
            <person name="Arakawa T."/>
            <person name="Banh J."/>
            <person name="Banno F."/>
            <person name="Bowser L."/>
            <person name="Brooks S.Y."/>
            <person name="Carninci P."/>
            <person name="Chao Q."/>
            <person name="Choy N."/>
            <person name="Enju A."/>
            <person name="Goldsmith A.D."/>
            <person name="Gurjal M."/>
            <person name="Hansen N.F."/>
            <person name="Hayashizaki Y."/>
            <person name="Johnson-Hopson C."/>
            <person name="Hsuan V.W."/>
            <person name="Iida K."/>
            <person name="Karnes M."/>
            <person name="Khan S."/>
            <person name="Koesema E."/>
            <person name="Ishida J."/>
            <person name="Jiang P.X."/>
            <person name="Jones T."/>
            <person name="Kawai J."/>
            <person name="Kamiya A."/>
            <person name="Meyers C."/>
            <person name="Nakajima M."/>
            <person name="Narusaka M."/>
            <person name="Seki M."/>
            <person name="Sakurai T."/>
            <person name="Satou M."/>
            <person name="Tamse R."/>
            <person name="Vaysberg M."/>
            <person name="Wallender E.K."/>
            <person name="Wong C."/>
            <person name="Yamamura Y."/>
            <person name="Yuan S."/>
            <person name="Shinozaki K."/>
            <person name="Davis R.W."/>
            <person name="Theologis A."/>
            <person name="Ecker J.R."/>
        </authorList>
    </citation>
    <scope>NUCLEOTIDE SEQUENCE [LARGE SCALE MRNA]</scope>
    <source>
        <strain>cv. Columbia</strain>
    </source>
</reference>
<reference key="7">
    <citation type="journal article" date="2000" name="Plant Cell Physiol.">
        <title>Circadian waves of expression of the APRR1/TOC1 family of pseudo-response regulators in Arabidopsis thaliana: insight into the plant circadian clock.</title>
        <authorList>
            <person name="Matsushika A."/>
            <person name="Makino S."/>
            <person name="Kojima M."/>
            <person name="Mizuno T."/>
        </authorList>
    </citation>
    <scope>FUNCTION</scope>
</reference>
<reference key="8">
    <citation type="journal article" date="2001" name="Science">
        <title>Reciprocal regulation between TOC1 and LHY/CCA1 within the Arabidopsis circadian clock.</title>
        <authorList>
            <person name="Alabadi D."/>
            <person name="Oyama T."/>
            <person name="Yanovsky M.J."/>
            <person name="Harmon F.G."/>
            <person name="Mas P."/>
            <person name="Kay S.A."/>
        </authorList>
    </citation>
    <scope>INDUCTION</scope>
</reference>
<reference key="9">
    <citation type="journal article" date="2002" name="Plant Cell Physiol.">
        <title>The APRR1/TOC1 quintet implicated in circadian rhythms of Arabidopsis thaliana: I. Characterization with APRR1-overexpressing plants.</title>
        <authorList>
            <person name="Makino S."/>
            <person name="Matsushika A."/>
            <person name="Kojima M."/>
            <person name="Yamashino T."/>
            <person name="Mizuno T."/>
        </authorList>
    </citation>
    <scope>INTERACTION WITH PIF1</scope>
</reference>
<reference key="10">
    <citation type="journal article" date="2003" name="Plant Cell Physiol.">
        <title>A link between circadian-controlled bHLH factors and the APRR1/TOC1 quintet in Arabidopsis thaliana.</title>
        <authorList>
            <person name="Yamashino T."/>
            <person name="Matsushika A."/>
            <person name="Fujimori T."/>
            <person name="Sato S."/>
            <person name="Kato T."/>
            <person name="Tabata S."/>
            <person name="Mizuno T."/>
        </authorList>
    </citation>
    <scope>INTERACTION WITH PIF1; PIL2; PIF3; PIF4; PIL5 AND PIL6</scope>
</reference>
<reference key="11">
    <citation type="journal article" date="2004" name="J. Exp. Bot.">
        <title>Identification of ASK and clock-associated proteins as molecular partners of LKP2 (LOV kelch protein 2) in Arabidopsis.</title>
        <authorList>
            <person name="Yasuhara M."/>
            <person name="Mitsui S."/>
            <person name="Hirano H."/>
            <person name="Takanabe R."/>
            <person name="Tokioka Y."/>
            <person name="Ihara N."/>
            <person name="Komatsu A."/>
            <person name="Seki M."/>
            <person name="Shinozaki K."/>
            <person name="Kiyosue T."/>
        </authorList>
    </citation>
    <scope>INTERACTION WITH ADO1 AND ADO2</scope>
</reference>
<reference key="12">
    <citation type="journal article" date="2006" name="Plant Physiol.">
        <title>Forward genetic analysis of the circadian clock separates the multiple functions of ZEITLUPE.</title>
        <authorList>
            <person name="Kevei E."/>
            <person name="Gyula P."/>
            <person name="Hall A."/>
            <person name="Kozma-Bognar L."/>
            <person name="Kim W.Y."/>
            <person name="Eriksson M.E."/>
            <person name="Toth R."/>
            <person name="Hanano S."/>
            <person name="Feher B."/>
            <person name="Southern M.M."/>
            <person name="Bastow R.M."/>
            <person name="Viczian A."/>
            <person name="Hibberd V."/>
            <person name="Davis S.J."/>
            <person name="Somers D.E."/>
            <person name="Nagy F."/>
            <person name="Millar A.J."/>
        </authorList>
    </citation>
    <scope>INTERACTION WITH ADO1</scope>
</reference>
<reference key="13">
    <citation type="journal article" date="2007" name="Plant Cell">
        <title>PRR3 Is a vascular regulator of TOC1 stability in the Arabidopsis circadian clock.</title>
        <authorList>
            <person name="Para A."/>
            <person name="Farre E.M."/>
            <person name="Imaizumi T."/>
            <person name="Pruneda-Paz J.L."/>
            <person name="Harmon F.G."/>
            <person name="Kay S.A."/>
        </authorList>
    </citation>
    <scope>TISSUE SPECIFICITY</scope>
    <scope>INTERACTION WITH APRR3</scope>
</reference>
<reference key="14">
    <citation type="journal article" date="2008" name="J. Biol. Chem.">
        <title>Post-translational regulation of the Arabidopsis circadian clock through selective proteolysis and phosphorylation of pseudo-response regulator proteins.</title>
        <authorList>
            <person name="Fujiwara S."/>
            <person name="Wang L."/>
            <person name="Han L."/>
            <person name="Suh S.-S."/>
            <person name="Salome P.A."/>
            <person name="McClung C.R."/>
            <person name="Somers D.E."/>
        </authorList>
    </citation>
    <scope>PHOSPHORYLATION</scope>
    <scope>INDUCTION</scope>
    <scope>SUBCELLULAR LOCATION</scope>
    <scope>INTERACTION WITH ADO1 AND APRR3</scope>
</reference>
<reference key="15">
    <citation type="journal article" date="2008" name="Plant J.">
        <title>CUL1 regulates TOC1 protein stability in the Arabidopsis circadian clock.</title>
        <authorList>
            <person name="Harmon F."/>
            <person name="Imaizumi T."/>
            <person name="Gray W.M."/>
        </authorList>
    </citation>
    <scope>ACTIVITY REGULATION</scope>
</reference>
<reference key="16">
    <citation type="journal article" date="2009" name="Science">
        <title>A functional genomics approach reveals CHE as a component of the Arabidopsis circadian clock.</title>
        <authorList>
            <person name="Pruneda-Paz J.L."/>
            <person name="Breton G."/>
            <person name="Para A."/>
            <person name="Kay S.A."/>
        </authorList>
    </citation>
    <scope>FUNCTION</scope>
    <scope>INTERACTION WITH TCP21</scope>
</reference>
<keyword id="KW-0090">Biological rhythms</keyword>
<keyword id="KW-0175">Coiled coil</keyword>
<keyword id="KW-0287">Flowering</keyword>
<keyword id="KW-0539">Nucleus</keyword>
<keyword id="KW-1185">Reference proteome</keyword>
<keyword id="KW-0804">Transcription</keyword>
<keyword id="KW-0805">Transcription regulation</keyword>
<keyword id="KW-0902">Two-component regulatory system</keyword>
<proteinExistence type="evidence at protein level"/>